<protein>
    <recommendedName>
        <fullName evidence="1">Putative tRNA (cytidine(32)/guanosine(34)-2'-O)-methyltransferase</fullName>
        <ecNumber evidence="1">2.1.1.205</ecNumber>
    </recommendedName>
    <alternativeName>
        <fullName evidence="1">2'-O-ribose RNA methyltransferase TRM7 homolog</fullName>
    </alternativeName>
</protein>
<accession>Q22031</accession>
<proteinExistence type="inferred from homology"/>
<feature type="chain" id="PRO_0000155586" description="Putative tRNA (cytidine(32)/guanosine(34)-2'-O)-methyltransferase">
    <location>
        <begin position="1"/>
        <end position="337"/>
    </location>
</feature>
<feature type="region of interest" description="Disordered" evidence="2">
    <location>
        <begin position="304"/>
        <end position="337"/>
    </location>
</feature>
<feature type="compositionally biased region" description="Basic and acidic residues" evidence="2">
    <location>
        <begin position="304"/>
        <end position="318"/>
    </location>
</feature>
<feature type="compositionally biased region" description="Basic and acidic residues" evidence="2">
    <location>
        <begin position="327"/>
        <end position="337"/>
    </location>
</feature>
<feature type="active site" description="Proton acceptor" evidence="1">
    <location>
        <position position="157"/>
    </location>
</feature>
<feature type="binding site" evidence="1">
    <location>
        <position position="53"/>
    </location>
    <ligand>
        <name>S-adenosyl-L-methionine</name>
        <dbReference type="ChEBI" id="CHEBI:59789"/>
    </ligand>
</feature>
<feature type="binding site" evidence="1">
    <location>
        <position position="55"/>
    </location>
    <ligand>
        <name>S-adenosyl-L-methionine</name>
        <dbReference type="ChEBI" id="CHEBI:59789"/>
    </ligand>
</feature>
<feature type="binding site" evidence="1">
    <location>
        <position position="76"/>
    </location>
    <ligand>
        <name>S-adenosyl-L-methionine</name>
        <dbReference type="ChEBI" id="CHEBI:59789"/>
    </ligand>
</feature>
<feature type="binding site" evidence="1">
    <location>
        <position position="92"/>
    </location>
    <ligand>
        <name>S-adenosyl-L-methionine</name>
        <dbReference type="ChEBI" id="CHEBI:59789"/>
    </ligand>
</feature>
<feature type="binding site" evidence="1">
    <location>
        <position position="117"/>
    </location>
    <ligand>
        <name>S-adenosyl-L-methionine</name>
        <dbReference type="ChEBI" id="CHEBI:59789"/>
    </ligand>
</feature>
<name>TRM7_CAEEL</name>
<gene>
    <name type="ORF">R74.7</name>
</gene>
<comment type="function">
    <text evidence="1">Methylates the 2'-O-ribose of nucleotides at positions 32 and 34 of the tRNA anticodon loop of substrate tRNAs.</text>
</comment>
<comment type="catalytic activity">
    <reaction evidence="1">
        <text>cytidine(32)/guanosine(34) in tRNA + 2 S-adenosyl-L-methionine = 2'-O-methylcytidine(32)/2'-O-methylguanosine(34) in tRNA + 2 S-adenosyl-L-homocysteine + 2 H(+)</text>
        <dbReference type="Rhea" id="RHEA:42396"/>
        <dbReference type="Rhea" id="RHEA-COMP:10246"/>
        <dbReference type="Rhea" id="RHEA-COMP:10247"/>
        <dbReference type="ChEBI" id="CHEBI:15378"/>
        <dbReference type="ChEBI" id="CHEBI:57856"/>
        <dbReference type="ChEBI" id="CHEBI:59789"/>
        <dbReference type="ChEBI" id="CHEBI:74269"/>
        <dbReference type="ChEBI" id="CHEBI:74445"/>
        <dbReference type="ChEBI" id="CHEBI:74495"/>
        <dbReference type="ChEBI" id="CHEBI:82748"/>
        <dbReference type="EC" id="2.1.1.205"/>
    </reaction>
</comment>
<comment type="subcellular location">
    <subcellularLocation>
        <location evidence="1">Cytoplasm</location>
    </subcellularLocation>
</comment>
<comment type="similarity">
    <text evidence="1">Belongs to the class I-like SAM-binding methyltransferase superfamily. RNA methyltransferase RlmE family. TRM7 subfamily.</text>
</comment>
<evidence type="ECO:0000255" key="1">
    <source>
        <dbReference type="HAMAP-Rule" id="MF_03162"/>
    </source>
</evidence>
<evidence type="ECO:0000256" key="2">
    <source>
        <dbReference type="SAM" id="MobiDB-lite"/>
    </source>
</evidence>
<organism>
    <name type="scientific">Caenorhabditis elegans</name>
    <dbReference type="NCBI Taxonomy" id="6239"/>
    <lineage>
        <taxon>Eukaryota</taxon>
        <taxon>Metazoa</taxon>
        <taxon>Ecdysozoa</taxon>
        <taxon>Nematoda</taxon>
        <taxon>Chromadorea</taxon>
        <taxon>Rhabditida</taxon>
        <taxon>Rhabditina</taxon>
        <taxon>Rhabditomorpha</taxon>
        <taxon>Rhabditoidea</taxon>
        <taxon>Rhabditidae</taxon>
        <taxon>Peloderinae</taxon>
        <taxon>Caenorhabditis</taxon>
    </lineage>
</organism>
<keyword id="KW-0963">Cytoplasm</keyword>
<keyword id="KW-0489">Methyltransferase</keyword>
<keyword id="KW-1185">Reference proteome</keyword>
<keyword id="KW-0949">S-adenosyl-L-methionine</keyword>
<keyword id="KW-0808">Transferase</keyword>
<keyword id="KW-0819">tRNA processing</keyword>
<sequence>MGKTSRDKRDIYYRLAKENKWRARSAFKLMQIDDEFQILKGVRRAVDLCAAPGSWSQVLSKRLYEEDQEAKIVAIDLQPMAPIPGVIQLQGDITSVDTANQVIKHFSGEKSDIVICDGAPDVTGIHSLDEFMQAELILAAFNITSHVLKEGGNFLAKIFRSRNSSLLYAQMKKYFKKVYLAKPRSSRQSSCEAFVLCLDYSPPEGFVPTMGKTSLDATDASAISPDIIDGFVTCGDLSGWDSEKSYPLDIDACFPKGEIDEEQKKRYEFKDVVQPPTDPAYKAALDKKKSGVFAKMSADLNRQLKAELSRGKDQKKTPAENVPSVEELEKAAEKFQL</sequence>
<reference key="1">
    <citation type="journal article" date="1998" name="Science">
        <title>Genome sequence of the nematode C. elegans: a platform for investigating biology.</title>
        <authorList>
            <consortium name="The C. elegans sequencing consortium"/>
        </authorList>
    </citation>
    <scope>NUCLEOTIDE SEQUENCE [LARGE SCALE GENOMIC DNA]</scope>
    <source>
        <strain>Bristol N2</strain>
    </source>
</reference>
<dbReference type="EC" id="2.1.1.205" evidence="1"/>
<dbReference type="EMBL" id="Z36238">
    <property type="protein sequence ID" value="CAA85279.2"/>
    <property type="molecule type" value="Genomic_DNA"/>
</dbReference>
<dbReference type="PIR" id="B88422">
    <property type="entry name" value="B88422"/>
</dbReference>
<dbReference type="PIR" id="T24259">
    <property type="entry name" value="T24259"/>
</dbReference>
<dbReference type="RefSeq" id="NP_497843.1">
    <property type="nucleotide sequence ID" value="NM_065442.7"/>
</dbReference>
<dbReference type="SMR" id="Q22031"/>
<dbReference type="BioGRID" id="40780">
    <property type="interactions" value="2"/>
</dbReference>
<dbReference type="FunCoup" id="Q22031">
    <property type="interactions" value="3266"/>
</dbReference>
<dbReference type="STRING" id="6239.R74.7.1"/>
<dbReference type="PaxDb" id="6239-R74.7"/>
<dbReference type="PeptideAtlas" id="Q22031"/>
<dbReference type="EnsemblMetazoa" id="R74.7.1">
    <property type="protein sequence ID" value="R74.7.1"/>
    <property type="gene ID" value="WBGene00011281"/>
</dbReference>
<dbReference type="GeneID" id="175543"/>
<dbReference type="KEGG" id="cel:CELE_R74.7"/>
<dbReference type="UCSC" id="R74.7">
    <property type="organism name" value="c. elegans"/>
</dbReference>
<dbReference type="AGR" id="WB:WBGene00011281"/>
<dbReference type="CTD" id="175543"/>
<dbReference type="WormBase" id="R74.7">
    <property type="protein sequence ID" value="CE23932"/>
    <property type="gene ID" value="WBGene00011281"/>
</dbReference>
<dbReference type="eggNOG" id="KOG1099">
    <property type="taxonomic scope" value="Eukaryota"/>
</dbReference>
<dbReference type="GeneTree" id="ENSGT00730000111146"/>
<dbReference type="HOGENOM" id="CLU_009422_1_1_1"/>
<dbReference type="InParanoid" id="Q22031"/>
<dbReference type="OMA" id="FIVCLNF"/>
<dbReference type="OrthoDB" id="289250at2759"/>
<dbReference type="PhylomeDB" id="Q22031"/>
<dbReference type="PRO" id="PR:Q22031"/>
<dbReference type="Proteomes" id="UP000001940">
    <property type="component" value="Chromosome III"/>
</dbReference>
<dbReference type="Bgee" id="WBGene00011281">
    <property type="expression patterns" value="Expressed in embryo and 4 other cell types or tissues"/>
</dbReference>
<dbReference type="GO" id="GO:0005737">
    <property type="term" value="C:cytoplasm"/>
    <property type="evidence" value="ECO:0000318"/>
    <property type="project" value="GO_Central"/>
</dbReference>
<dbReference type="GO" id="GO:0005829">
    <property type="term" value="C:cytosol"/>
    <property type="evidence" value="ECO:0000250"/>
    <property type="project" value="UniProtKB"/>
</dbReference>
<dbReference type="GO" id="GO:1904047">
    <property type="term" value="F:S-adenosyl-L-methionine binding"/>
    <property type="evidence" value="ECO:0000250"/>
    <property type="project" value="UniProtKB"/>
</dbReference>
<dbReference type="GO" id="GO:0106340">
    <property type="term" value="F:tRNA (cytidine(32)/guanosine(34)-2'-O)-methyltransferase activity"/>
    <property type="evidence" value="ECO:0000250"/>
    <property type="project" value="UniProtKB"/>
</dbReference>
<dbReference type="GO" id="GO:0016423">
    <property type="term" value="F:tRNA (guanine) methyltransferase activity"/>
    <property type="evidence" value="ECO:0000250"/>
    <property type="project" value="UniProtKB"/>
</dbReference>
<dbReference type="GO" id="GO:0008175">
    <property type="term" value="F:tRNA methyltransferase activity"/>
    <property type="evidence" value="ECO:0000318"/>
    <property type="project" value="GO_Central"/>
</dbReference>
<dbReference type="GO" id="GO:0002181">
    <property type="term" value="P:cytoplasmic translation"/>
    <property type="evidence" value="ECO:0000250"/>
    <property type="project" value="UniProtKB"/>
</dbReference>
<dbReference type="GO" id="GO:0022008">
    <property type="term" value="P:neurogenesis"/>
    <property type="evidence" value="ECO:0000250"/>
    <property type="project" value="UniProtKB"/>
</dbReference>
<dbReference type="GO" id="GO:0030488">
    <property type="term" value="P:tRNA methylation"/>
    <property type="evidence" value="ECO:0000318"/>
    <property type="project" value="GO_Central"/>
</dbReference>
<dbReference type="GO" id="GO:0002128">
    <property type="term" value="P:tRNA nucleoside ribose methylation"/>
    <property type="evidence" value="ECO:0000250"/>
    <property type="project" value="UniProtKB"/>
</dbReference>
<dbReference type="GO" id="GO:0002130">
    <property type="term" value="P:wobble position ribose methylation"/>
    <property type="evidence" value="ECO:0000250"/>
    <property type="project" value="UniProtKB"/>
</dbReference>
<dbReference type="FunFam" id="3.40.50.150:FF:000040">
    <property type="entry name" value="Putative ribosomal RNA methyltransferase 1"/>
    <property type="match status" value="1"/>
</dbReference>
<dbReference type="Gene3D" id="3.40.50.150">
    <property type="entry name" value="Vaccinia Virus protein VP39"/>
    <property type="match status" value="1"/>
</dbReference>
<dbReference type="HAMAP" id="MF_01547">
    <property type="entry name" value="RNA_methyltr_E"/>
    <property type="match status" value="1"/>
</dbReference>
<dbReference type="HAMAP" id="MF_03162">
    <property type="entry name" value="RNA_methyltr_E_TRM7"/>
    <property type="match status" value="1"/>
</dbReference>
<dbReference type="InterPro" id="IPR028590">
    <property type="entry name" value="RNA_methyltr_E_TRM7"/>
</dbReference>
<dbReference type="InterPro" id="IPR050082">
    <property type="entry name" value="RNA_methyltr_RlmE"/>
</dbReference>
<dbReference type="InterPro" id="IPR002877">
    <property type="entry name" value="RNA_MeTrfase_FtsJ_dom"/>
</dbReference>
<dbReference type="InterPro" id="IPR015507">
    <property type="entry name" value="rRNA-MeTfrase_E"/>
</dbReference>
<dbReference type="InterPro" id="IPR029063">
    <property type="entry name" value="SAM-dependent_MTases_sf"/>
</dbReference>
<dbReference type="PANTHER" id="PTHR10920">
    <property type="entry name" value="RIBOSOMAL RNA METHYLTRANSFERASE"/>
    <property type="match status" value="1"/>
</dbReference>
<dbReference type="PANTHER" id="PTHR10920:SF12">
    <property type="entry name" value="TRNA (CYTIDINE(32)_GUANOSINE(34)-2'-O)-METHYLTRANSFERASE-RELATED"/>
    <property type="match status" value="1"/>
</dbReference>
<dbReference type="Pfam" id="PF01728">
    <property type="entry name" value="FtsJ"/>
    <property type="match status" value="1"/>
</dbReference>
<dbReference type="SUPFAM" id="SSF53335">
    <property type="entry name" value="S-adenosyl-L-methionine-dependent methyltransferases"/>
    <property type="match status" value="1"/>
</dbReference>